<dbReference type="GO" id="GO:0005576">
    <property type="term" value="C:extracellular region"/>
    <property type="evidence" value="ECO:0007669"/>
    <property type="project" value="UniProtKB-SubCell"/>
</dbReference>
<dbReference type="GO" id="GO:0007218">
    <property type="term" value="P:neuropeptide signaling pathway"/>
    <property type="evidence" value="ECO:0007669"/>
    <property type="project" value="UniProtKB-KW"/>
</dbReference>
<dbReference type="InterPro" id="IPR013231">
    <property type="entry name" value="Periviscerokinin"/>
</dbReference>
<dbReference type="Pfam" id="PF08259">
    <property type="entry name" value="Periviscerokin"/>
    <property type="match status" value="1"/>
</dbReference>
<protein>
    <recommendedName>
        <fullName>Periviscerokinin-2.1</fullName>
        <shortName>PVK-2.1</shortName>
    </recommendedName>
    <component>
        <recommendedName>
            <fullName>Periviscerokinin-2.2</fullName>
            <shortName>PVK-2.2</shortName>
        </recommendedName>
    </component>
</protein>
<evidence type="ECO:0000255" key="1"/>
<evidence type="ECO:0000269" key="2">
    <source>
    </source>
</evidence>
<evidence type="ECO:0000305" key="3"/>
<name>PVK2_DEREJ</name>
<comment type="function">
    <text evidence="3">Mediates visceral muscle contractile activity (myotropic activity).</text>
</comment>
<comment type="subcellular location">
    <subcellularLocation>
        <location evidence="2">Secreted</location>
    </subcellularLocation>
</comment>
<comment type="tissue specificity">
    <text evidence="2">Abdominal perisympathetic organs.</text>
</comment>
<comment type="mass spectrometry" mass="1159.6" method="MALDI" evidence="2">
    <molecule>Periviscerokinin-2.1</molecule>
</comment>
<comment type="mass spectrometry" mass="1102.6" method="MALDI" evidence="2">
    <molecule>Periviscerokinin-2.2</molecule>
</comment>
<comment type="similarity">
    <text evidence="1">Belongs to the periviscerokinin family.</text>
</comment>
<feature type="peptide" id="PRO_0000023619" description="Periviscerokinin-2.1">
    <location>
        <begin position="1"/>
        <end position="12"/>
    </location>
</feature>
<feature type="peptide" id="PRO_0000023620" description="Periviscerokinin-2.2">
    <location>
        <begin position="2"/>
        <end position="12"/>
    </location>
</feature>
<feature type="modified residue" description="Valine amide" evidence="2">
    <location>
        <position position="12"/>
    </location>
</feature>
<sequence length="12" mass="1160">GGSSGLISMPRV</sequence>
<reference evidence="3" key="1">
    <citation type="journal article" date="2005" name="Peptides">
        <title>Peptidomics of neurohemal organs from species of the cockroach family Blattidae: how do neuropeptides of closely related species differ?</title>
        <authorList>
            <person name="Predel R."/>
            <person name="Gaede G."/>
        </authorList>
    </citation>
    <scope>PROTEIN SEQUENCE</scope>
    <scope>SUBCELLULAR LOCATION</scope>
    <scope>TISSUE SPECIFICITY</scope>
    <scope>MASS SPECTROMETRY</scope>
    <scope>AMIDATION AT VAL-12</scope>
    <source>
        <tissue evidence="2">Abdominal perisympathetic organs</tissue>
    </source>
</reference>
<keyword id="KW-0027">Amidation</keyword>
<keyword id="KW-0903">Direct protein sequencing</keyword>
<keyword id="KW-0527">Neuropeptide</keyword>
<keyword id="KW-0964">Secreted</keyword>
<accession>P84379</accession>
<accession>P84430</accession>
<organism>
    <name type="scientific">Deropeltis cf. erythrocephala JT-2004</name>
    <name type="common">Cockroach</name>
    <dbReference type="NCBI Taxonomy" id="303919"/>
    <lineage>
        <taxon>Eukaryota</taxon>
        <taxon>Metazoa</taxon>
        <taxon>Ecdysozoa</taxon>
        <taxon>Arthropoda</taxon>
        <taxon>Hexapoda</taxon>
        <taxon>Insecta</taxon>
        <taxon>Pterygota</taxon>
        <taxon>Neoptera</taxon>
        <taxon>Polyneoptera</taxon>
        <taxon>Dictyoptera</taxon>
        <taxon>Blattodea</taxon>
        <taxon>Blattoidea</taxon>
        <taxon>Blattidae</taxon>
        <taxon>Blattinae</taxon>
        <taxon>Deropeltis</taxon>
    </lineage>
</organism>
<proteinExistence type="evidence at protein level"/>